<dbReference type="EMBL" id="CP000076">
    <property type="protein sequence ID" value="AAY94795.1"/>
    <property type="molecule type" value="Genomic_DNA"/>
</dbReference>
<dbReference type="RefSeq" id="WP_011063780.1">
    <property type="nucleotide sequence ID" value="NC_004129.6"/>
</dbReference>
<dbReference type="SMR" id="Q4K525"/>
<dbReference type="STRING" id="220664.PFL_5590"/>
<dbReference type="GeneID" id="57478539"/>
<dbReference type="KEGG" id="pfl:PFL_5590"/>
<dbReference type="PATRIC" id="fig|220664.5.peg.5709"/>
<dbReference type="eggNOG" id="COG0222">
    <property type="taxonomic scope" value="Bacteria"/>
</dbReference>
<dbReference type="HOGENOM" id="CLU_086499_3_0_6"/>
<dbReference type="Proteomes" id="UP000008540">
    <property type="component" value="Chromosome"/>
</dbReference>
<dbReference type="GO" id="GO:0022625">
    <property type="term" value="C:cytosolic large ribosomal subunit"/>
    <property type="evidence" value="ECO:0007669"/>
    <property type="project" value="TreeGrafter"/>
</dbReference>
<dbReference type="GO" id="GO:0003729">
    <property type="term" value="F:mRNA binding"/>
    <property type="evidence" value="ECO:0007669"/>
    <property type="project" value="TreeGrafter"/>
</dbReference>
<dbReference type="GO" id="GO:0003735">
    <property type="term" value="F:structural constituent of ribosome"/>
    <property type="evidence" value="ECO:0007669"/>
    <property type="project" value="InterPro"/>
</dbReference>
<dbReference type="GO" id="GO:0006412">
    <property type="term" value="P:translation"/>
    <property type="evidence" value="ECO:0007669"/>
    <property type="project" value="UniProtKB-UniRule"/>
</dbReference>
<dbReference type="CDD" id="cd00387">
    <property type="entry name" value="Ribosomal_L7_L12"/>
    <property type="match status" value="1"/>
</dbReference>
<dbReference type="FunFam" id="3.30.1390.10:FF:000001">
    <property type="entry name" value="50S ribosomal protein L7/L12"/>
    <property type="match status" value="1"/>
</dbReference>
<dbReference type="Gene3D" id="3.30.1390.10">
    <property type="match status" value="1"/>
</dbReference>
<dbReference type="Gene3D" id="1.20.5.710">
    <property type="entry name" value="Single helix bin"/>
    <property type="match status" value="1"/>
</dbReference>
<dbReference type="HAMAP" id="MF_00368">
    <property type="entry name" value="Ribosomal_bL12"/>
    <property type="match status" value="1"/>
</dbReference>
<dbReference type="InterPro" id="IPR000206">
    <property type="entry name" value="Ribosomal_bL12"/>
</dbReference>
<dbReference type="InterPro" id="IPR013823">
    <property type="entry name" value="Ribosomal_bL12_C"/>
</dbReference>
<dbReference type="InterPro" id="IPR014719">
    <property type="entry name" value="Ribosomal_bL12_C/ClpS-like"/>
</dbReference>
<dbReference type="InterPro" id="IPR008932">
    <property type="entry name" value="Ribosomal_bL12_oligo"/>
</dbReference>
<dbReference type="InterPro" id="IPR036235">
    <property type="entry name" value="Ribosomal_bL12_oligo_N_sf"/>
</dbReference>
<dbReference type="NCBIfam" id="TIGR00855">
    <property type="entry name" value="L12"/>
    <property type="match status" value="1"/>
</dbReference>
<dbReference type="PANTHER" id="PTHR45987">
    <property type="entry name" value="39S RIBOSOMAL PROTEIN L12"/>
    <property type="match status" value="1"/>
</dbReference>
<dbReference type="PANTHER" id="PTHR45987:SF4">
    <property type="entry name" value="LARGE RIBOSOMAL SUBUNIT PROTEIN BL12M"/>
    <property type="match status" value="1"/>
</dbReference>
<dbReference type="Pfam" id="PF00542">
    <property type="entry name" value="Ribosomal_L12"/>
    <property type="match status" value="1"/>
</dbReference>
<dbReference type="Pfam" id="PF16320">
    <property type="entry name" value="Ribosomal_L12_N"/>
    <property type="match status" value="1"/>
</dbReference>
<dbReference type="SUPFAM" id="SSF54736">
    <property type="entry name" value="ClpS-like"/>
    <property type="match status" value="1"/>
</dbReference>
<dbReference type="SUPFAM" id="SSF48300">
    <property type="entry name" value="Ribosomal protein L7/12, oligomerisation (N-terminal) domain"/>
    <property type="match status" value="1"/>
</dbReference>
<gene>
    <name evidence="1" type="primary">rplL</name>
    <name type="ordered locus">PFL_5590</name>
</gene>
<sequence length="121" mass="12460">MSLTNEQIIEAIGQKTVLEVVELIKAMEETFGVTAAVAAAGPAAAAAVVEEQTEFNVMLTEAGEKKVNVIKAVRELTGLGLKEAKAVVDGAPAMVLEAVAKEAADKAKAALEEAGAKVELK</sequence>
<keyword id="KW-0687">Ribonucleoprotein</keyword>
<keyword id="KW-0689">Ribosomal protein</keyword>
<evidence type="ECO:0000255" key="1">
    <source>
        <dbReference type="HAMAP-Rule" id="MF_00368"/>
    </source>
</evidence>
<evidence type="ECO:0000305" key="2"/>
<name>RL7_PSEF5</name>
<accession>Q4K525</accession>
<reference key="1">
    <citation type="journal article" date="2005" name="Nat. Biotechnol.">
        <title>Complete genome sequence of the plant commensal Pseudomonas fluorescens Pf-5.</title>
        <authorList>
            <person name="Paulsen I.T."/>
            <person name="Press C.M."/>
            <person name="Ravel J."/>
            <person name="Kobayashi D.Y."/>
            <person name="Myers G.S.A."/>
            <person name="Mavrodi D.V."/>
            <person name="DeBoy R.T."/>
            <person name="Seshadri R."/>
            <person name="Ren Q."/>
            <person name="Madupu R."/>
            <person name="Dodson R.J."/>
            <person name="Durkin A.S."/>
            <person name="Brinkac L.M."/>
            <person name="Daugherty S.C."/>
            <person name="Sullivan S.A."/>
            <person name="Rosovitz M.J."/>
            <person name="Gwinn M.L."/>
            <person name="Zhou L."/>
            <person name="Schneider D.J."/>
            <person name="Cartinhour S.W."/>
            <person name="Nelson W.C."/>
            <person name="Weidman J."/>
            <person name="Watkins K."/>
            <person name="Tran K."/>
            <person name="Khouri H."/>
            <person name="Pierson E.A."/>
            <person name="Pierson L.S. III"/>
            <person name="Thomashow L.S."/>
            <person name="Loper J.E."/>
        </authorList>
    </citation>
    <scope>NUCLEOTIDE SEQUENCE [LARGE SCALE GENOMIC DNA]</scope>
    <source>
        <strain>ATCC BAA-477 / NRRL B-23932 / Pf-5</strain>
    </source>
</reference>
<feature type="chain" id="PRO_0000243472" description="Large ribosomal subunit protein bL12">
    <location>
        <begin position="1"/>
        <end position="121"/>
    </location>
</feature>
<comment type="function">
    <text evidence="1">Forms part of the ribosomal stalk which helps the ribosome interact with GTP-bound translation factors. Is thus essential for accurate translation.</text>
</comment>
<comment type="subunit">
    <text evidence="1">Homodimer. Part of the ribosomal stalk of the 50S ribosomal subunit. Forms a multimeric L10(L12)X complex, where L10 forms an elongated spine to which 2 to 4 L12 dimers bind in a sequential fashion. Binds GTP-bound translation factors.</text>
</comment>
<comment type="similarity">
    <text evidence="1">Belongs to the bacterial ribosomal protein bL12 family.</text>
</comment>
<organism>
    <name type="scientific">Pseudomonas fluorescens (strain ATCC BAA-477 / NRRL B-23932 / Pf-5)</name>
    <dbReference type="NCBI Taxonomy" id="220664"/>
    <lineage>
        <taxon>Bacteria</taxon>
        <taxon>Pseudomonadati</taxon>
        <taxon>Pseudomonadota</taxon>
        <taxon>Gammaproteobacteria</taxon>
        <taxon>Pseudomonadales</taxon>
        <taxon>Pseudomonadaceae</taxon>
        <taxon>Pseudomonas</taxon>
    </lineage>
</organism>
<proteinExistence type="inferred from homology"/>
<protein>
    <recommendedName>
        <fullName evidence="1">Large ribosomal subunit protein bL12</fullName>
    </recommendedName>
    <alternativeName>
        <fullName evidence="2">50S ribosomal protein L7/L12</fullName>
    </alternativeName>
</protein>